<sequence length="228" mass="25587">MSPSLTWHDVIGQEKEQPYFKDTLAYVAAERRAGKTIYPPQKDIFNAFRLTELDQVKVVILGQDPYHGPNQAHGLSFSVLPGVPAPPSLGNIYKELVTDIPGFQRPNHGFLQSWAEQGVLLLNTVLTVEAGKAHSHANLGWETFTDRVIAALNEHREGVIFMLWGSHAQKKGRIINTERHYILKAPHPSPLSAHRGFLGCKHFSQANQLLQQQNQQPIDWQPKLPAVE</sequence>
<feature type="chain" id="PRO_1000096619" description="Uracil-DNA glycosylase">
    <location>
        <begin position="1"/>
        <end position="228"/>
    </location>
</feature>
<feature type="active site" description="Proton acceptor" evidence="1">
    <location>
        <position position="64"/>
    </location>
</feature>
<keyword id="KW-0963">Cytoplasm</keyword>
<keyword id="KW-0227">DNA damage</keyword>
<keyword id="KW-0234">DNA repair</keyword>
<keyword id="KW-0378">Hydrolase</keyword>
<reference key="1">
    <citation type="submission" date="2008-04" db="EMBL/GenBank/DDBJ databases">
        <title>Complete sequence of Yersinia pseudotuberculosis PB1/+.</title>
        <authorList>
            <person name="Copeland A."/>
            <person name="Lucas S."/>
            <person name="Lapidus A."/>
            <person name="Glavina del Rio T."/>
            <person name="Dalin E."/>
            <person name="Tice H."/>
            <person name="Bruce D."/>
            <person name="Goodwin L."/>
            <person name="Pitluck S."/>
            <person name="Munk A.C."/>
            <person name="Brettin T."/>
            <person name="Detter J.C."/>
            <person name="Han C."/>
            <person name="Tapia R."/>
            <person name="Schmutz J."/>
            <person name="Larimer F."/>
            <person name="Land M."/>
            <person name="Hauser L."/>
            <person name="Challacombe J.F."/>
            <person name="Green L."/>
            <person name="Lindler L.E."/>
            <person name="Nikolich M.P."/>
            <person name="Richardson P."/>
        </authorList>
    </citation>
    <scope>NUCLEOTIDE SEQUENCE [LARGE SCALE GENOMIC DNA]</scope>
    <source>
        <strain>PB1/+</strain>
    </source>
</reference>
<evidence type="ECO:0000255" key="1">
    <source>
        <dbReference type="HAMAP-Rule" id="MF_00148"/>
    </source>
</evidence>
<comment type="function">
    <text evidence="1">Excises uracil residues from the DNA which can arise as a result of misincorporation of dUMP residues by DNA polymerase or due to deamination of cytosine.</text>
</comment>
<comment type="catalytic activity">
    <reaction evidence="1">
        <text>Hydrolyzes single-stranded DNA or mismatched double-stranded DNA and polynucleotides, releasing free uracil.</text>
        <dbReference type="EC" id="3.2.2.27"/>
    </reaction>
</comment>
<comment type="subcellular location">
    <subcellularLocation>
        <location evidence="1">Cytoplasm</location>
    </subcellularLocation>
</comment>
<comment type="similarity">
    <text evidence="1">Belongs to the uracil-DNA glycosylase (UDG) superfamily. UNG family.</text>
</comment>
<accession>B2KA63</accession>
<protein>
    <recommendedName>
        <fullName evidence="1">Uracil-DNA glycosylase</fullName>
        <shortName evidence="1">UDG</shortName>
        <ecNumber evidence="1">3.2.2.27</ecNumber>
    </recommendedName>
</protein>
<name>UNG_YERPB</name>
<organism>
    <name type="scientific">Yersinia pseudotuberculosis serotype IB (strain PB1/+)</name>
    <dbReference type="NCBI Taxonomy" id="502801"/>
    <lineage>
        <taxon>Bacteria</taxon>
        <taxon>Pseudomonadati</taxon>
        <taxon>Pseudomonadota</taxon>
        <taxon>Gammaproteobacteria</taxon>
        <taxon>Enterobacterales</taxon>
        <taxon>Yersiniaceae</taxon>
        <taxon>Yersinia</taxon>
    </lineage>
</organism>
<dbReference type="EC" id="3.2.2.27" evidence="1"/>
<dbReference type="EMBL" id="CP001048">
    <property type="protein sequence ID" value="ACC89974.1"/>
    <property type="molecule type" value="Genomic_DNA"/>
</dbReference>
<dbReference type="RefSeq" id="WP_012303780.1">
    <property type="nucleotide sequence ID" value="NZ_CP009780.1"/>
</dbReference>
<dbReference type="SMR" id="B2KA63"/>
<dbReference type="KEGG" id="ypb:YPTS_3017"/>
<dbReference type="PATRIC" id="fig|502801.10.peg.2447"/>
<dbReference type="GO" id="GO:0005737">
    <property type="term" value="C:cytoplasm"/>
    <property type="evidence" value="ECO:0007669"/>
    <property type="project" value="UniProtKB-SubCell"/>
</dbReference>
<dbReference type="GO" id="GO:0004844">
    <property type="term" value="F:uracil DNA N-glycosylase activity"/>
    <property type="evidence" value="ECO:0007669"/>
    <property type="project" value="UniProtKB-UniRule"/>
</dbReference>
<dbReference type="GO" id="GO:0097510">
    <property type="term" value="P:base-excision repair, AP site formation via deaminated base removal"/>
    <property type="evidence" value="ECO:0007669"/>
    <property type="project" value="TreeGrafter"/>
</dbReference>
<dbReference type="CDD" id="cd10027">
    <property type="entry name" value="UDG-F1-like"/>
    <property type="match status" value="1"/>
</dbReference>
<dbReference type="FunFam" id="3.40.470.10:FF:000001">
    <property type="entry name" value="Uracil-DNA glycosylase"/>
    <property type="match status" value="1"/>
</dbReference>
<dbReference type="Gene3D" id="3.40.470.10">
    <property type="entry name" value="Uracil-DNA glycosylase-like domain"/>
    <property type="match status" value="1"/>
</dbReference>
<dbReference type="HAMAP" id="MF_00148">
    <property type="entry name" value="UDG"/>
    <property type="match status" value="1"/>
</dbReference>
<dbReference type="InterPro" id="IPR002043">
    <property type="entry name" value="UDG_fam1"/>
</dbReference>
<dbReference type="InterPro" id="IPR018085">
    <property type="entry name" value="Ura-DNA_Glyclase_AS"/>
</dbReference>
<dbReference type="InterPro" id="IPR005122">
    <property type="entry name" value="Uracil-DNA_glycosylase-like"/>
</dbReference>
<dbReference type="InterPro" id="IPR036895">
    <property type="entry name" value="Uracil-DNA_glycosylase-like_sf"/>
</dbReference>
<dbReference type="NCBIfam" id="NF003588">
    <property type="entry name" value="PRK05254.1-1"/>
    <property type="match status" value="1"/>
</dbReference>
<dbReference type="NCBIfam" id="NF003589">
    <property type="entry name" value="PRK05254.1-2"/>
    <property type="match status" value="1"/>
</dbReference>
<dbReference type="NCBIfam" id="NF003591">
    <property type="entry name" value="PRK05254.1-4"/>
    <property type="match status" value="1"/>
</dbReference>
<dbReference type="NCBIfam" id="NF003592">
    <property type="entry name" value="PRK05254.1-5"/>
    <property type="match status" value="1"/>
</dbReference>
<dbReference type="NCBIfam" id="TIGR00628">
    <property type="entry name" value="ung"/>
    <property type="match status" value="1"/>
</dbReference>
<dbReference type="PANTHER" id="PTHR11264">
    <property type="entry name" value="URACIL-DNA GLYCOSYLASE"/>
    <property type="match status" value="1"/>
</dbReference>
<dbReference type="PANTHER" id="PTHR11264:SF0">
    <property type="entry name" value="URACIL-DNA GLYCOSYLASE"/>
    <property type="match status" value="1"/>
</dbReference>
<dbReference type="Pfam" id="PF03167">
    <property type="entry name" value="UDG"/>
    <property type="match status" value="1"/>
</dbReference>
<dbReference type="SMART" id="SM00986">
    <property type="entry name" value="UDG"/>
    <property type="match status" value="1"/>
</dbReference>
<dbReference type="SMART" id="SM00987">
    <property type="entry name" value="UreE_C"/>
    <property type="match status" value="1"/>
</dbReference>
<dbReference type="SUPFAM" id="SSF52141">
    <property type="entry name" value="Uracil-DNA glycosylase-like"/>
    <property type="match status" value="1"/>
</dbReference>
<dbReference type="PROSITE" id="PS00130">
    <property type="entry name" value="U_DNA_GLYCOSYLASE"/>
    <property type="match status" value="1"/>
</dbReference>
<proteinExistence type="inferred from homology"/>
<gene>
    <name evidence="1" type="primary">ung</name>
    <name type="ordered locus">YPTS_3017</name>
</gene>